<organism>
    <name type="scientific">Debaryomyces hansenii (strain ATCC 36239 / CBS 767 / BCRC 21394 / JCM 1990 / NBRC 0083 / IGC 2968)</name>
    <name type="common">Yeast</name>
    <name type="synonym">Torulaspora hansenii</name>
    <dbReference type="NCBI Taxonomy" id="284592"/>
    <lineage>
        <taxon>Eukaryota</taxon>
        <taxon>Fungi</taxon>
        <taxon>Dikarya</taxon>
        <taxon>Ascomycota</taxon>
        <taxon>Saccharomycotina</taxon>
        <taxon>Pichiomycetes</taxon>
        <taxon>Debaryomycetaceae</taxon>
        <taxon>Debaryomyces</taxon>
    </lineage>
</organism>
<sequence length="297" mass="33046">MVTIGNAHDDLIHDAVLDYYGKRLATCSSDKTIKLFEVEGTENYKLVETLIGHEGPVWQVAWAHPKFGSILASCSYDGKALIWKEQPETQQWSIIAEHTVHQASVNSVSWAPHELGAILLCTSSDGKVSVVDFNDDGTTSHIIFDAHAIGVNSASWAPLSNNNTKGKDTNSIRRFVTCGSDNLAKIWKFDSSKNAYIEEAVLEGHTDWVRDVCWSPSILIRSYIATASQDRTVLIWSQDNNGKWQKQLLTEEMFPDVCWRCSWSLSGNILAVSGGDNKVSLWKENLQGKWESAGEVE</sequence>
<proteinExistence type="inferred from homology"/>
<keyword id="KW-0968">Cytoplasmic vesicle</keyword>
<keyword id="KW-0256">Endoplasmic reticulum</keyword>
<keyword id="KW-0931">ER-Golgi transport</keyword>
<keyword id="KW-0472">Membrane</keyword>
<keyword id="KW-0509">mRNA transport</keyword>
<keyword id="KW-0906">Nuclear pore complex</keyword>
<keyword id="KW-0539">Nucleus</keyword>
<keyword id="KW-0653">Protein transport</keyword>
<keyword id="KW-1185">Reference proteome</keyword>
<keyword id="KW-0677">Repeat</keyword>
<keyword id="KW-0811">Translocation</keyword>
<keyword id="KW-0813">Transport</keyword>
<keyword id="KW-0853">WD repeat</keyword>
<name>SEC13_DEBHA</name>
<evidence type="ECO:0000250" key="1"/>
<evidence type="ECO:0000250" key="2">
    <source>
        <dbReference type="UniProtKB" id="Q04491"/>
    </source>
</evidence>
<evidence type="ECO:0000305" key="3"/>
<gene>
    <name type="primary">SEC13</name>
    <name type="ordered locus">DEHA2G08338g</name>
</gene>
<dbReference type="EMBL" id="CR382139">
    <property type="protein sequence ID" value="CAG90373.1"/>
    <property type="molecule type" value="Genomic_DNA"/>
</dbReference>
<dbReference type="RefSeq" id="XP_461910.1">
    <property type="nucleotide sequence ID" value="XM_461910.1"/>
</dbReference>
<dbReference type="SMR" id="Q6BIR1"/>
<dbReference type="FunCoup" id="Q6BIR1">
    <property type="interactions" value="1134"/>
</dbReference>
<dbReference type="STRING" id="284592.Q6BIR1"/>
<dbReference type="GeneID" id="2904793"/>
<dbReference type="KEGG" id="dha:DEHA2G08338g"/>
<dbReference type="VEuPathDB" id="FungiDB:DEHA2G08338g"/>
<dbReference type="eggNOG" id="KOG1332">
    <property type="taxonomic scope" value="Eukaryota"/>
</dbReference>
<dbReference type="HOGENOM" id="CLU_032441_0_1_1"/>
<dbReference type="InParanoid" id="Q6BIR1"/>
<dbReference type="OMA" id="IWKEEGD"/>
<dbReference type="OrthoDB" id="364224at2759"/>
<dbReference type="Proteomes" id="UP000000599">
    <property type="component" value="Chromosome G"/>
</dbReference>
<dbReference type="GO" id="GO:0030127">
    <property type="term" value="C:COPII vesicle coat"/>
    <property type="evidence" value="ECO:0007669"/>
    <property type="project" value="EnsemblFungi"/>
</dbReference>
<dbReference type="GO" id="GO:0005789">
    <property type="term" value="C:endoplasmic reticulum membrane"/>
    <property type="evidence" value="ECO:0007669"/>
    <property type="project" value="UniProtKB-SubCell"/>
</dbReference>
<dbReference type="GO" id="GO:0061700">
    <property type="term" value="C:GATOR2 complex"/>
    <property type="evidence" value="ECO:0007669"/>
    <property type="project" value="EnsemblFungi"/>
</dbReference>
<dbReference type="GO" id="GO:0031080">
    <property type="term" value="C:nuclear pore outer ring"/>
    <property type="evidence" value="ECO:0007669"/>
    <property type="project" value="EnsemblFungi"/>
</dbReference>
<dbReference type="GO" id="GO:0005198">
    <property type="term" value="F:structural molecule activity"/>
    <property type="evidence" value="ECO:0007669"/>
    <property type="project" value="EnsemblFungi"/>
</dbReference>
<dbReference type="GO" id="GO:0090114">
    <property type="term" value="P:COPII-coated vesicle budding"/>
    <property type="evidence" value="ECO:0007669"/>
    <property type="project" value="EnsemblFungi"/>
</dbReference>
<dbReference type="GO" id="GO:0036503">
    <property type="term" value="P:ERAD pathway"/>
    <property type="evidence" value="ECO:0007669"/>
    <property type="project" value="EnsemblFungi"/>
</dbReference>
<dbReference type="GO" id="GO:0051028">
    <property type="term" value="P:mRNA transport"/>
    <property type="evidence" value="ECO:0007669"/>
    <property type="project" value="UniProtKB-KW"/>
</dbReference>
<dbReference type="GO" id="GO:0051664">
    <property type="term" value="P:nuclear pore localization"/>
    <property type="evidence" value="ECO:0007669"/>
    <property type="project" value="EnsemblFungi"/>
</dbReference>
<dbReference type="GO" id="GO:0045893">
    <property type="term" value="P:positive regulation of DNA-templated transcription"/>
    <property type="evidence" value="ECO:0007669"/>
    <property type="project" value="EnsemblFungi"/>
</dbReference>
<dbReference type="GO" id="GO:1902953">
    <property type="term" value="P:positive regulation of ER to Golgi vesicle-mediated transport"/>
    <property type="evidence" value="ECO:0007669"/>
    <property type="project" value="EnsemblFungi"/>
</dbReference>
<dbReference type="GO" id="GO:0070863">
    <property type="term" value="P:positive regulation of protein exit from endoplasmic reticulum"/>
    <property type="evidence" value="ECO:0007669"/>
    <property type="project" value="EnsemblFungi"/>
</dbReference>
<dbReference type="GO" id="GO:1904263">
    <property type="term" value="P:positive regulation of TORC1 signaling"/>
    <property type="evidence" value="ECO:0007669"/>
    <property type="project" value="EnsemblFungi"/>
</dbReference>
<dbReference type="GO" id="GO:0032527">
    <property type="term" value="P:protein exit from endoplasmic reticulum"/>
    <property type="evidence" value="ECO:0007669"/>
    <property type="project" value="TreeGrafter"/>
</dbReference>
<dbReference type="GO" id="GO:0006606">
    <property type="term" value="P:protein import into nucleus"/>
    <property type="evidence" value="ECO:0007669"/>
    <property type="project" value="TreeGrafter"/>
</dbReference>
<dbReference type="FunFam" id="2.130.10.10:FF:000017">
    <property type="entry name" value="SEC13 homolog (S. cerevisiae)"/>
    <property type="match status" value="1"/>
</dbReference>
<dbReference type="Gene3D" id="2.130.10.10">
    <property type="entry name" value="YVTN repeat-like/Quinoprotein amine dehydrogenase"/>
    <property type="match status" value="1"/>
</dbReference>
<dbReference type="InterPro" id="IPR037363">
    <property type="entry name" value="Sec13/Seh1_fam"/>
</dbReference>
<dbReference type="InterPro" id="IPR015943">
    <property type="entry name" value="WD40/YVTN_repeat-like_dom_sf"/>
</dbReference>
<dbReference type="InterPro" id="IPR036322">
    <property type="entry name" value="WD40_repeat_dom_sf"/>
</dbReference>
<dbReference type="InterPro" id="IPR001680">
    <property type="entry name" value="WD40_rpt"/>
</dbReference>
<dbReference type="PANTHER" id="PTHR11024">
    <property type="entry name" value="NUCLEAR PORE COMPLEX PROTEIN SEC13 / SEH1 FAMILY MEMBER"/>
    <property type="match status" value="1"/>
</dbReference>
<dbReference type="PANTHER" id="PTHR11024:SF2">
    <property type="entry name" value="PROTEIN SEC13 HOMOLOG"/>
    <property type="match status" value="1"/>
</dbReference>
<dbReference type="Pfam" id="PF00400">
    <property type="entry name" value="WD40"/>
    <property type="match status" value="6"/>
</dbReference>
<dbReference type="SMART" id="SM00320">
    <property type="entry name" value="WD40"/>
    <property type="match status" value="6"/>
</dbReference>
<dbReference type="SUPFAM" id="SSF50978">
    <property type="entry name" value="WD40 repeat-like"/>
    <property type="match status" value="1"/>
</dbReference>
<dbReference type="PROSITE" id="PS50082">
    <property type="entry name" value="WD_REPEATS_2"/>
    <property type="match status" value="2"/>
</dbReference>
<dbReference type="PROSITE" id="PS50294">
    <property type="entry name" value="WD_REPEATS_REGION"/>
    <property type="match status" value="1"/>
</dbReference>
<accession>Q6BIR1</accession>
<reference key="1">
    <citation type="journal article" date="2004" name="Nature">
        <title>Genome evolution in yeasts.</title>
        <authorList>
            <person name="Dujon B."/>
            <person name="Sherman D."/>
            <person name="Fischer G."/>
            <person name="Durrens P."/>
            <person name="Casaregola S."/>
            <person name="Lafontaine I."/>
            <person name="de Montigny J."/>
            <person name="Marck C."/>
            <person name="Neuveglise C."/>
            <person name="Talla E."/>
            <person name="Goffard N."/>
            <person name="Frangeul L."/>
            <person name="Aigle M."/>
            <person name="Anthouard V."/>
            <person name="Babour A."/>
            <person name="Barbe V."/>
            <person name="Barnay S."/>
            <person name="Blanchin S."/>
            <person name="Beckerich J.-M."/>
            <person name="Beyne E."/>
            <person name="Bleykasten C."/>
            <person name="Boisrame A."/>
            <person name="Boyer J."/>
            <person name="Cattolico L."/>
            <person name="Confanioleri F."/>
            <person name="de Daruvar A."/>
            <person name="Despons L."/>
            <person name="Fabre E."/>
            <person name="Fairhead C."/>
            <person name="Ferry-Dumazet H."/>
            <person name="Groppi A."/>
            <person name="Hantraye F."/>
            <person name="Hennequin C."/>
            <person name="Jauniaux N."/>
            <person name="Joyet P."/>
            <person name="Kachouri R."/>
            <person name="Kerrest A."/>
            <person name="Koszul R."/>
            <person name="Lemaire M."/>
            <person name="Lesur I."/>
            <person name="Ma L."/>
            <person name="Muller H."/>
            <person name="Nicaud J.-M."/>
            <person name="Nikolski M."/>
            <person name="Oztas S."/>
            <person name="Ozier-Kalogeropoulos O."/>
            <person name="Pellenz S."/>
            <person name="Potier S."/>
            <person name="Richard G.-F."/>
            <person name="Straub M.-L."/>
            <person name="Suleau A."/>
            <person name="Swennen D."/>
            <person name="Tekaia F."/>
            <person name="Wesolowski-Louvel M."/>
            <person name="Westhof E."/>
            <person name="Wirth B."/>
            <person name="Zeniou-Meyer M."/>
            <person name="Zivanovic Y."/>
            <person name="Bolotin-Fukuhara M."/>
            <person name="Thierry A."/>
            <person name="Bouchier C."/>
            <person name="Caudron B."/>
            <person name="Scarpelli C."/>
            <person name="Gaillardin C."/>
            <person name="Weissenbach J."/>
            <person name="Wincker P."/>
            <person name="Souciet J.-L."/>
        </authorList>
    </citation>
    <scope>NUCLEOTIDE SEQUENCE [LARGE SCALE GENOMIC DNA]</scope>
    <source>
        <strain>ATCC 36239 / CBS 767 / BCRC 21394 / JCM 1990 / NBRC 0083 / IGC 2968</strain>
    </source>
</reference>
<feature type="chain" id="PRO_0000295414" description="Protein transport protein SEC13">
    <location>
        <begin position="1"/>
        <end position="297"/>
    </location>
</feature>
<feature type="repeat" description="WD 1">
    <location>
        <begin position="7"/>
        <end position="46"/>
    </location>
</feature>
<feature type="repeat" description="WD 2">
    <location>
        <begin position="52"/>
        <end position="93"/>
    </location>
</feature>
<feature type="repeat" description="WD 3">
    <location>
        <begin position="100"/>
        <end position="141"/>
    </location>
</feature>
<feature type="repeat" description="WD 4">
    <location>
        <begin position="146"/>
        <end position="197"/>
    </location>
</feature>
<feature type="repeat" description="WD 5">
    <location>
        <begin position="204"/>
        <end position="246"/>
    </location>
</feature>
<feature type="repeat" description="WD 6">
    <location>
        <begin position="253"/>
        <end position="292"/>
    </location>
</feature>
<protein>
    <recommendedName>
        <fullName>Protein transport protein SEC13</fullName>
    </recommendedName>
</protein>
<comment type="function">
    <text evidence="2">Component of the coat protein complex II (COPII) which promotes the formation of transport vesicles from the endoplasmic reticulum (ER). The coat has two main functions, the physical deformation of the endoplasmic reticulum membrane into vesicles and the selection of cargo molecules. It also functions as a component of the nuclear pore complex (NPC). NPC components, collectively referred to as nucleoporins (NUPs), can play the role of both NPC structural components and of docking or interaction partners for transiently associated nuclear transport factors. SEC13 is required for efficient mRNA export from the nucleus to the cytoplasm and for correct nuclear pore biogenesis and distribution (By similarity).</text>
</comment>
<comment type="subunit">
    <text evidence="2">The COPII coat is composed of at least 5 proteins: the SEC23/24 complex, the SEC13/31 complex, and the protein SAR1. Component of the nuclear pore complex (NPC). NPC constitutes the exclusive means of nucleocytoplasmic transport. NPCs allow the passive diffusion of ions and small molecules and the active, nuclear transport receptor-mediated bidirectional transport of macromolecules such as proteins, RNAs, ribonucleoparticles (RNPs), and ribosomal subunits across the nuclear envelope. Due to its 8-fold rotational symmetry, all subunits are present with 8 copies or multiples thereof.</text>
</comment>
<comment type="subcellular location">
    <subcellularLocation>
        <location evidence="1">Cytoplasmic vesicle</location>
        <location evidence="1">COPII-coated vesicle membrane</location>
        <topology evidence="1">Peripheral membrane protein</topology>
        <orientation evidence="1">Cytoplasmic side</orientation>
    </subcellularLocation>
    <subcellularLocation>
        <location evidence="1">Endoplasmic reticulum membrane</location>
        <topology evidence="1">Peripheral membrane protein</topology>
        <orientation evidence="1">Cytoplasmic side</orientation>
    </subcellularLocation>
    <subcellularLocation>
        <location evidence="2">Nucleus</location>
        <location evidence="2">Nuclear pore complex</location>
    </subcellularLocation>
</comment>
<comment type="similarity">
    <text evidence="3">Belongs to the WD repeat SEC13 family.</text>
</comment>